<sequence length="604" mass="68006">MELRDSIRSFPTAPGVYLMRDATGTILYVGKARNLRQRVSNYFGATDGRPQVRFLMARVTSIEFTITDTEKEALLLENTLIKQHQPRYNLNLKDDKTFFSLRIDLTERFPRFTVVRKVSRDGARYFGPYASASAAREVLRQLQRMFPLRHYPLKTCLNRSRPCLYHQIGQCSAPCHNLITAEEYNLLVEGAVLFLEGKNKDLVSGFRQRMKEAAEGLHYEEAARWRDLLKAIDTTLEHQKMVSQGGDSDILGLAGNEDSLAIAVLFVRGGSLSGSTVLHGSGGLDTSDTLATFIQYYYGNERFIPDELLLPLSLDAGQSLEEWLSELKGKKVRLQQPKRGDKLNLVNLATRNAQAALAEKSATRQGIERTLAELQQKLALPRLPRRIECYDISTLQGRHSVGSGVAFLDGLPDKERYRRYRIRESQGQDDFGMLQEVFARRFSPERIEQWGLPDLVVVDGGIGQLNSTLSVLAELGLSERPAVVSLAKSRVKGDGKDIHVERTEERVFLPGRRNPVRLRQDSAPLKLLAAIRDEAHRFAIGYHRRLRDRETLRSALREIPGVGPKLERLLLTRFGSLEGIQNATVEELATVAGVSQELARLIKA</sequence>
<dbReference type="EMBL" id="CP001089">
    <property type="protein sequence ID" value="ACD94306.1"/>
    <property type="molecule type" value="Genomic_DNA"/>
</dbReference>
<dbReference type="RefSeq" id="WP_012468662.1">
    <property type="nucleotide sequence ID" value="NC_010814.1"/>
</dbReference>
<dbReference type="SMR" id="B3E394"/>
<dbReference type="STRING" id="398767.Glov_0579"/>
<dbReference type="KEGG" id="glo:Glov_0579"/>
<dbReference type="eggNOG" id="COG0322">
    <property type="taxonomic scope" value="Bacteria"/>
</dbReference>
<dbReference type="HOGENOM" id="CLU_014841_3_2_7"/>
<dbReference type="OrthoDB" id="9804933at2"/>
<dbReference type="Proteomes" id="UP000002420">
    <property type="component" value="Chromosome"/>
</dbReference>
<dbReference type="GO" id="GO:0005737">
    <property type="term" value="C:cytoplasm"/>
    <property type="evidence" value="ECO:0007669"/>
    <property type="project" value="UniProtKB-SubCell"/>
</dbReference>
<dbReference type="GO" id="GO:0009380">
    <property type="term" value="C:excinuclease repair complex"/>
    <property type="evidence" value="ECO:0007669"/>
    <property type="project" value="InterPro"/>
</dbReference>
<dbReference type="GO" id="GO:0003677">
    <property type="term" value="F:DNA binding"/>
    <property type="evidence" value="ECO:0007669"/>
    <property type="project" value="UniProtKB-UniRule"/>
</dbReference>
<dbReference type="GO" id="GO:0009381">
    <property type="term" value="F:excinuclease ABC activity"/>
    <property type="evidence" value="ECO:0007669"/>
    <property type="project" value="UniProtKB-UniRule"/>
</dbReference>
<dbReference type="GO" id="GO:0006289">
    <property type="term" value="P:nucleotide-excision repair"/>
    <property type="evidence" value="ECO:0007669"/>
    <property type="project" value="UniProtKB-UniRule"/>
</dbReference>
<dbReference type="GO" id="GO:0009432">
    <property type="term" value="P:SOS response"/>
    <property type="evidence" value="ECO:0007669"/>
    <property type="project" value="UniProtKB-UniRule"/>
</dbReference>
<dbReference type="CDD" id="cd10434">
    <property type="entry name" value="GIY-YIG_UvrC_Cho"/>
    <property type="match status" value="1"/>
</dbReference>
<dbReference type="FunFam" id="3.40.1440.10:FF:000001">
    <property type="entry name" value="UvrABC system protein C"/>
    <property type="match status" value="1"/>
</dbReference>
<dbReference type="Gene3D" id="1.10.150.20">
    <property type="entry name" value="5' to 3' exonuclease, C-terminal subdomain"/>
    <property type="match status" value="1"/>
</dbReference>
<dbReference type="Gene3D" id="3.40.1440.10">
    <property type="entry name" value="GIY-YIG endonuclease"/>
    <property type="match status" value="1"/>
</dbReference>
<dbReference type="Gene3D" id="4.10.860.10">
    <property type="entry name" value="UVR domain"/>
    <property type="match status" value="1"/>
</dbReference>
<dbReference type="Gene3D" id="3.30.420.340">
    <property type="entry name" value="UvrC, RNAse H endonuclease domain"/>
    <property type="match status" value="1"/>
</dbReference>
<dbReference type="HAMAP" id="MF_00203">
    <property type="entry name" value="UvrC"/>
    <property type="match status" value="1"/>
</dbReference>
<dbReference type="InterPro" id="IPR000305">
    <property type="entry name" value="GIY-YIG_endonuc"/>
</dbReference>
<dbReference type="InterPro" id="IPR035901">
    <property type="entry name" value="GIY-YIG_endonuc_sf"/>
</dbReference>
<dbReference type="InterPro" id="IPR047296">
    <property type="entry name" value="GIY-YIG_UvrC_Cho"/>
</dbReference>
<dbReference type="InterPro" id="IPR010994">
    <property type="entry name" value="RuvA_2-like"/>
</dbReference>
<dbReference type="InterPro" id="IPR001943">
    <property type="entry name" value="UVR_dom"/>
</dbReference>
<dbReference type="InterPro" id="IPR036876">
    <property type="entry name" value="UVR_dom_sf"/>
</dbReference>
<dbReference type="InterPro" id="IPR050066">
    <property type="entry name" value="UvrABC_protein_C"/>
</dbReference>
<dbReference type="InterPro" id="IPR004791">
    <property type="entry name" value="UvrC"/>
</dbReference>
<dbReference type="InterPro" id="IPR001162">
    <property type="entry name" value="UvrC_RNase_H_dom"/>
</dbReference>
<dbReference type="InterPro" id="IPR038476">
    <property type="entry name" value="UvrC_RNase_H_dom_sf"/>
</dbReference>
<dbReference type="NCBIfam" id="NF001824">
    <property type="entry name" value="PRK00558.1-5"/>
    <property type="match status" value="1"/>
</dbReference>
<dbReference type="NCBIfam" id="TIGR00194">
    <property type="entry name" value="uvrC"/>
    <property type="match status" value="1"/>
</dbReference>
<dbReference type="PANTHER" id="PTHR30562:SF1">
    <property type="entry name" value="UVRABC SYSTEM PROTEIN C"/>
    <property type="match status" value="1"/>
</dbReference>
<dbReference type="PANTHER" id="PTHR30562">
    <property type="entry name" value="UVRC/OXIDOREDUCTASE"/>
    <property type="match status" value="1"/>
</dbReference>
<dbReference type="Pfam" id="PF01541">
    <property type="entry name" value="GIY-YIG"/>
    <property type="match status" value="1"/>
</dbReference>
<dbReference type="Pfam" id="PF14520">
    <property type="entry name" value="HHH_5"/>
    <property type="match status" value="1"/>
</dbReference>
<dbReference type="Pfam" id="PF02151">
    <property type="entry name" value="UVR"/>
    <property type="match status" value="1"/>
</dbReference>
<dbReference type="Pfam" id="PF22920">
    <property type="entry name" value="UvrC_RNaseH"/>
    <property type="match status" value="1"/>
</dbReference>
<dbReference type="Pfam" id="PF08459">
    <property type="entry name" value="UvrC_RNaseH_dom"/>
    <property type="match status" value="1"/>
</dbReference>
<dbReference type="SMART" id="SM00465">
    <property type="entry name" value="GIYc"/>
    <property type="match status" value="1"/>
</dbReference>
<dbReference type="SUPFAM" id="SSF46600">
    <property type="entry name" value="C-terminal UvrC-binding domain of UvrB"/>
    <property type="match status" value="1"/>
</dbReference>
<dbReference type="SUPFAM" id="SSF82771">
    <property type="entry name" value="GIY-YIG endonuclease"/>
    <property type="match status" value="1"/>
</dbReference>
<dbReference type="SUPFAM" id="SSF47781">
    <property type="entry name" value="RuvA domain 2-like"/>
    <property type="match status" value="1"/>
</dbReference>
<dbReference type="PROSITE" id="PS50164">
    <property type="entry name" value="GIY_YIG"/>
    <property type="match status" value="1"/>
</dbReference>
<dbReference type="PROSITE" id="PS50151">
    <property type="entry name" value="UVR"/>
    <property type="match status" value="1"/>
</dbReference>
<dbReference type="PROSITE" id="PS50165">
    <property type="entry name" value="UVRC"/>
    <property type="match status" value="1"/>
</dbReference>
<organism>
    <name type="scientific">Trichlorobacter lovleyi (strain ATCC BAA-1151 / DSM 17278 / SZ)</name>
    <name type="common">Geobacter lovleyi</name>
    <dbReference type="NCBI Taxonomy" id="398767"/>
    <lineage>
        <taxon>Bacteria</taxon>
        <taxon>Pseudomonadati</taxon>
        <taxon>Thermodesulfobacteriota</taxon>
        <taxon>Desulfuromonadia</taxon>
        <taxon>Geobacterales</taxon>
        <taxon>Geobacteraceae</taxon>
        <taxon>Trichlorobacter</taxon>
    </lineage>
</organism>
<proteinExistence type="inferred from homology"/>
<feature type="chain" id="PRO_1000099486" description="UvrABC system protein C">
    <location>
        <begin position="1"/>
        <end position="604"/>
    </location>
</feature>
<feature type="domain" description="GIY-YIG" evidence="1">
    <location>
        <begin position="12"/>
        <end position="90"/>
    </location>
</feature>
<feature type="domain" description="UVR" evidence="1">
    <location>
        <begin position="200"/>
        <end position="235"/>
    </location>
</feature>
<reference key="1">
    <citation type="submission" date="2008-05" db="EMBL/GenBank/DDBJ databases">
        <title>Complete sequence of chromosome of Geobacter lovleyi SZ.</title>
        <authorList>
            <consortium name="US DOE Joint Genome Institute"/>
            <person name="Lucas S."/>
            <person name="Copeland A."/>
            <person name="Lapidus A."/>
            <person name="Glavina del Rio T."/>
            <person name="Dalin E."/>
            <person name="Tice H."/>
            <person name="Bruce D."/>
            <person name="Goodwin L."/>
            <person name="Pitluck S."/>
            <person name="Chertkov O."/>
            <person name="Meincke L."/>
            <person name="Brettin T."/>
            <person name="Detter J.C."/>
            <person name="Han C."/>
            <person name="Tapia R."/>
            <person name="Kuske C.R."/>
            <person name="Schmutz J."/>
            <person name="Larimer F."/>
            <person name="Land M."/>
            <person name="Hauser L."/>
            <person name="Kyrpides N."/>
            <person name="Mikhailova N."/>
            <person name="Sung Y."/>
            <person name="Fletcher K.E."/>
            <person name="Ritalahti K.M."/>
            <person name="Loeffler F.E."/>
            <person name="Richardson P."/>
        </authorList>
    </citation>
    <scope>NUCLEOTIDE SEQUENCE [LARGE SCALE GENOMIC DNA]</scope>
    <source>
        <strain>ATCC BAA-1151 / DSM 17278 / SZ</strain>
    </source>
</reference>
<comment type="function">
    <text evidence="1">The UvrABC repair system catalyzes the recognition and processing of DNA lesions. UvrC both incises the 5' and 3' sides of the lesion. The N-terminal half is responsible for the 3' incision and the C-terminal half is responsible for the 5' incision.</text>
</comment>
<comment type="subunit">
    <text evidence="1">Interacts with UvrB in an incision complex.</text>
</comment>
<comment type="subcellular location">
    <subcellularLocation>
        <location evidence="1">Cytoplasm</location>
    </subcellularLocation>
</comment>
<comment type="similarity">
    <text evidence="1">Belongs to the UvrC family.</text>
</comment>
<protein>
    <recommendedName>
        <fullName evidence="1">UvrABC system protein C</fullName>
        <shortName evidence="1">Protein UvrC</shortName>
    </recommendedName>
    <alternativeName>
        <fullName evidence="1">Excinuclease ABC subunit C</fullName>
    </alternativeName>
</protein>
<accession>B3E394</accession>
<keyword id="KW-0963">Cytoplasm</keyword>
<keyword id="KW-0227">DNA damage</keyword>
<keyword id="KW-0228">DNA excision</keyword>
<keyword id="KW-0234">DNA repair</keyword>
<keyword id="KW-0267">Excision nuclease</keyword>
<keyword id="KW-1185">Reference proteome</keyword>
<keyword id="KW-0742">SOS response</keyword>
<evidence type="ECO:0000255" key="1">
    <source>
        <dbReference type="HAMAP-Rule" id="MF_00203"/>
    </source>
</evidence>
<name>UVRC_TRIL1</name>
<gene>
    <name evidence="1" type="primary">uvrC</name>
    <name type="ordered locus">Glov_0579</name>
</gene>